<dbReference type="EC" id="4.1.1.65" evidence="1"/>
<dbReference type="EMBL" id="CP001150">
    <property type="protein sequence ID" value="ACM01937.1"/>
    <property type="molecule type" value="Genomic_DNA"/>
</dbReference>
<dbReference type="KEGG" id="rsk:RSKD131_2077"/>
<dbReference type="HOGENOM" id="CLU_072492_0_0_5"/>
<dbReference type="UniPathway" id="UPA00558">
    <property type="reaction ID" value="UER00616"/>
</dbReference>
<dbReference type="GO" id="GO:0005886">
    <property type="term" value="C:plasma membrane"/>
    <property type="evidence" value="ECO:0007669"/>
    <property type="project" value="UniProtKB-SubCell"/>
</dbReference>
<dbReference type="GO" id="GO:0004609">
    <property type="term" value="F:phosphatidylserine decarboxylase activity"/>
    <property type="evidence" value="ECO:0007669"/>
    <property type="project" value="UniProtKB-UniRule"/>
</dbReference>
<dbReference type="GO" id="GO:0006646">
    <property type="term" value="P:phosphatidylethanolamine biosynthetic process"/>
    <property type="evidence" value="ECO:0007669"/>
    <property type="project" value="UniProtKB-UniRule"/>
</dbReference>
<dbReference type="HAMAP" id="MF_00664">
    <property type="entry name" value="PS_decarb_PSD_A"/>
    <property type="match status" value="1"/>
</dbReference>
<dbReference type="InterPro" id="IPR003817">
    <property type="entry name" value="PS_Dcarbxylase"/>
</dbReference>
<dbReference type="InterPro" id="IPR033175">
    <property type="entry name" value="PSD-A"/>
</dbReference>
<dbReference type="NCBIfam" id="NF003677">
    <property type="entry name" value="PRK05305.1-1"/>
    <property type="match status" value="1"/>
</dbReference>
<dbReference type="NCBIfam" id="NF003678">
    <property type="entry name" value="PRK05305.1-2"/>
    <property type="match status" value="1"/>
</dbReference>
<dbReference type="NCBIfam" id="NF003679">
    <property type="entry name" value="PRK05305.1-3"/>
    <property type="match status" value="1"/>
</dbReference>
<dbReference type="NCBIfam" id="NF003685">
    <property type="entry name" value="PRK05305.2-5"/>
    <property type="match status" value="1"/>
</dbReference>
<dbReference type="PANTHER" id="PTHR35809">
    <property type="entry name" value="ARCHAETIDYLSERINE DECARBOXYLASE PROENZYME-RELATED"/>
    <property type="match status" value="1"/>
</dbReference>
<dbReference type="PANTHER" id="PTHR35809:SF1">
    <property type="entry name" value="ARCHAETIDYLSERINE DECARBOXYLASE PROENZYME-RELATED"/>
    <property type="match status" value="1"/>
</dbReference>
<dbReference type="Pfam" id="PF02666">
    <property type="entry name" value="PS_Dcarbxylase"/>
    <property type="match status" value="1"/>
</dbReference>
<reference key="1">
    <citation type="journal article" date="2009" name="J. Bacteriol.">
        <title>Complete genome sequence of Rhodobacter sphaeroides KD131.</title>
        <authorList>
            <person name="Lim S.-K."/>
            <person name="Kim S.J."/>
            <person name="Cha S.H."/>
            <person name="Oh Y.-K."/>
            <person name="Rhee H.-J."/>
            <person name="Kim M.-S."/>
            <person name="Lee J.K."/>
        </authorList>
    </citation>
    <scope>NUCLEOTIDE SEQUENCE [LARGE SCALE GENOMIC DNA]</scope>
    <source>
        <strain>KD131 / KCTC 12085</strain>
    </source>
</reference>
<keyword id="KW-1003">Cell membrane</keyword>
<keyword id="KW-0210">Decarboxylase</keyword>
<keyword id="KW-0444">Lipid biosynthesis</keyword>
<keyword id="KW-0443">Lipid metabolism</keyword>
<keyword id="KW-0456">Lyase</keyword>
<keyword id="KW-0472">Membrane</keyword>
<keyword id="KW-0594">Phospholipid biosynthesis</keyword>
<keyword id="KW-1208">Phospholipid metabolism</keyword>
<keyword id="KW-0670">Pyruvate</keyword>
<keyword id="KW-0865">Zymogen</keyword>
<comment type="function">
    <text evidence="1">Catalyzes the formation of phosphatidylethanolamine (PtdEtn) from phosphatidylserine (PtdSer).</text>
</comment>
<comment type="catalytic activity">
    <reaction evidence="1">
        <text>a 1,2-diacyl-sn-glycero-3-phospho-L-serine + H(+) = a 1,2-diacyl-sn-glycero-3-phosphoethanolamine + CO2</text>
        <dbReference type="Rhea" id="RHEA:20828"/>
        <dbReference type="ChEBI" id="CHEBI:15378"/>
        <dbReference type="ChEBI" id="CHEBI:16526"/>
        <dbReference type="ChEBI" id="CHEBI:57262"/>
        <dbReference type="ChEBI" id="CHEBI:64612"/>
        <dbReference type="EC" id="4.1.1.65"/>
    </reaction>
</comment>
<comment type="cofactor">
    <cofactor evidence="1">
        <name>pyruvate</name>
        <dbReference type="ChEBI" id="CHEBI:15361"/>
    </cofactor>
    <text evidence="1">Binds 1 pyruvoyl group covalently per subunit.</text>
</comment>
<comment type="pathway">
    <text evidence="1">Phospholipid metabolism; phosphatidylethanolamine biosynthesis; phosphatidylethanolamine from CDP-diacylglycerol: step 2/2.</text>
</comment>
<comment type="subunit">
    <text evidence="1">Heterodimer of a large membrane-associated beta subunit and a small pyruvoyl-containing alpha subunit.</text>
</comment>
<comment type="subcellular location">
    <subcellularLocation>
        <location evidence="1">Cell membrane</location>
        <topology evidence="1">Peripheral membrane protein</topology>
    </subcellularLocation>
</comment>
<comment type="PTM">
    <text evidence="1">Is synthesized initially as an inactive proenzyme. Formation of the active enzyme involves a self-maturation process in which the active site pyruvoyl group is generated from an internal serine residue via an autocatalytic post-translational modification. Two non-identical subunits are generated from the proenzyme in this reaction, and the pyruvate is formed at the N-terminus of the alpha chain, which is derived from the carboxyl end of the proenzyme. The post-translation cleavage follows an unusual pathway, termed non-hydrolytic serinolysis, in which the side chain hydroxyl group of the serine supplies its oxygen atom to form the C-terminus of the beta chain, while the remainder of the serine residue undergoes an oxidative deamination to produce ammonia and the pyruvoyl prosthetic group on the alpha chain.</text>
</comment>
<comment type="similarity">
    <text evidence="1">Belongs to the phosphatidylserine decarboxylase family. PSD-A subfamily.</text>
</comment>
<gene>
    <name evidence="1" type="primary">psd</name>
    <name type="ordered locus">RSKD131_2077</name>
</gene>
<evidence type="ECO:0000255" key="1">
    <source>
        <dbReference type="HAMAP-Rule" id="MF_00664"/>
    </source>
</evidence>
<protein>
    <recommendedName>
        <fullName evidence="1">Phosphatidylserine decarboxylase proenzyme</fullName>
        <ecNumber evidence="1">4.1.1.65</ecNumber>
    </recommendedName>
    <component>
        <recommendedName>
            <fullName evidence="1">Phosphatidylserine decarboxylase alpha chain</fullName>
        </recommendedName>
    </component>
    <component>
        <recommendedName>
            <fullName evidence="1">Phosphatidylserine decarboxylase beta chain</fullName>
        </recommendedName>
    </component>
</protein>
<accession>B9KLR2</accession>
<sequence>MAIDLLSTFIKPMHREGTKFVAIFAVVTLVLFLIWEPLGWIGVGLTVWCYYFFRDPVRVTPTREGLIVSPADGVVSLIEPAVPPAELGMGPAPMTRVSVFMSVFDCHVNRAPIGGTVTAVAYRPGKFLNASLDKASEDNERNALAIRLADGRQIAVVQIAGLVARRILCEVREGTPLLTGERFGMIRFGSRLDVYLPEGVQPLVCLGQVMTSGETVLADLTSPEARRTGAAR</sequence>
<name>PSD_CERSK</name>
<organism>
    <name type="scientific">Cereibacter sphaeroides (strain KD131 / KCTC 12085)</name>
    <name type="common">Rhodobacter sphaeroides</name>
    <dbReference type="NCBI Taxonomy" id="557760"/>
    <lineage>
        <taxon>Bacteria</taxon>
        <taxon>Pseudomonadati</taxon>
        <taxon>Pseudomonadota</taxon>
        <taxon>Alphaproteobacteria</taxon>
        <taxon>Rhodobacterales</taxon>
        <taxon>Paracoccaceae</taxon>
        <taxon>Cereibacter</taxon>
    </lineage>
</organism>
<feature type="chain" id="PRO_1000147645" description="Phosphatidylserine decarboxylase beta chain" evidence="1">
    <location>
        <begin position="1"/>
        <end position="189"/>
    </location>
</feature>
<feature type="chain" id="PRO_1000147646" description="Phosphatidylserine decarboxylase alpha chain" evidence="1">
    <location>
        <begin position="190"/>
        <end position="232"/>
    </location>
</feature>
<feature type="active site" description="Schiff-base intermediate with substrate; via pyruvic acid" evidence="1">
    <location>
        <position position="190"/>
    </location>
</feature>
<feature type="site" description="Cleavage (non-hydrolytic); by autocatalysis" evidence="1">
    <location>
        <begin position="189"/>
        <end position="190"/>
    </location>
</feature>
<feature type="modified residue" description="Pyruvic acid (Ser); by autocatalysis" evidence="1">
    <location>
        <position position="190"/>
    </location>
</feature>
<proteinExistence type="inferred from homology"/>